<reference key="1">
    <citation type="journal article" date="2009" name="J. Bacteriol.">
        <title>Genomic sequencing reveals regulatory mutations and recombinational events in the widely used MC4100 lineage of Escherichia coli K-12.</title>
        <authorList>
            <person name="Ferenci T."/>
            <person name="Zhou Z."/>
            <person name="Betteridge T."/>
            <person name="Ren Y."/>
            <person name="Liu Y."/>
            <person name="Feng L."/>
            <person name="Reeves P.R."/>
            <person name="Wang L."/>
        </authorList>
    </citation>
    <scope>NUCLEOTIDE SEQUENCE [LARGE SCALE GENOMIC DNA]</scope>
    <source>
        <strain>K12 / MC4100 / BW2952</strain>
    </source>
</reference>
<sequence>MKTAYIAKQRQISFVKSHFSRQLEERLGLIEVQAPILSRVGDGTQDNLSGCEKAVQVKVKALPDAQFEVVHSLAKWKRQTLGQHDFSAGEGLYTHMKALRPDEDRLSPLHSVYVDQWDWERVMGDGERQFSTLKSTVEAIWAGIKATEAAVSEEFGLAPFLPDQIHFVHSQELLSRYPDLDAKGRERAIAKDLGAVFLVGIGGKLSDGHRHDVRAPDYDDWSTPSELGHAGLNGDILVWNPVLEDAFELSSMGIRVDADTLKHQLALTGDEDRLELEWHQALLRGEMPQTIGGGIGQSRLTMLLLQLPHIGQVQCGVWPAAVRESVPSLL</sequence>
<protein>
    <recommendedName>
        <fullName evidence="1">Aspartate--ammonia ligase</fullName>
        <ecNumber evidence="1">6.3.1.1</ecNumber>
    </recommendedName>
    <alternativeName>
        <fullName evidence="1">Asparagine synthetase A</fullName>
    </alternativeName>
</protein>
<feature type="chain" id="PRO_1000212012" description="Aspartate--ammonia ligase">
    <location>
        <begin position="1"/>
        <end position="330"/>
    </location>
</feature>
<name>ASNA_ECOBW</name>
<dbReference type="EC" id="6.3.1.1" evidence="1"/>
<dbReference type="EMBL" id="CP001396">
    <property type="protein sequence ID" value="ACR62016.1"/>
    <property type="molecule type" value="Genomic_DNA"/>
</dbReference>
<dbReference type="RefSeq" id="WP_000845104.1">
    <property type="nucleotide sequence ID" value="NC_012759.1"/>
</dbReference>
<dbReference type="SMR" id="C4ZZ22"/>
<dbReference type="KEGG" id="ebw:BWG_3435"/>
<dbReference type="HOGENOM" id="CLU_071543_0_0_6"/>
<dbReference type="UniPathway" id="UPA00134">
    <property type="reaction ID" value="UER00194"/>
</dbReference>
<dbReference type="GO" id="GO:0005829">
    <property type="term" value="C:cytosol"/>
    <property type="evidence" value="ECO:0007669"/>
    <property type="project" value="TreeGrafter"/>
</dbReference>
<dbReference type="GO" id="GO:0004071">
    <property type="term" value="F:aspartate-ammonia ligase activity"/>
    <property type="evidence" value="ECO:0007669"/>
    <property type="project" value="UniProtKB-UniRule"/>
</dbReference>
<dbReference type="GO" id="GO:0005524">
    <property type="term" value="F:ATP binding"/>
    <property type="evidence" value="ECO:0007669"/>
    <property type="project" value="UniProtKB-UniRule"/>
</dbReference>
<dbReference type="GO" id="GO:0070981">
    <property type="term" value="P:L-asparagine biosynthetic process"/>
    <property type="evidence" value="ECO:0007669"/>
    <property type="project" value="UniProtKB-UniRule"/>
</dbReference>
<dbReference type="CDD" id="cd00645">
    <property type="entry name" value="AsnA"/>
    <property type="match status" value="1"/>
</dbReference>
<dbReference type="FunFam" id="3.30.930.10:FF:000025">
    <property type="entry name" value="Aspartate--ammonia ligase"/>
    <property type="match status" value="1"/>
</dbReference>
<dbReference type="Gene3D" id="3.30.930.10">
    <property type="entry name" value="Bira Bifunctional Protein, Domain 2"/>
    <property type="match status" value="1"/>
</dbReference>
<dbReference type="HAMAP" id="MF_00555">
    <property type="entry name" value="AsnA"/>
    <property type="match status" value="1"/>
</dbReference>
<dbReference type="InterPro" id="IPR006195">
    <property type="entry name" value="aa-tRNA-synth_II"/>
</dbReference>
<dbReference type="InterPro" id="IPR045864">
    <property type="entry name" value="aa-tRNA-synth_II/BPL/LPL"/>
</dbReference>
<dbReference type="InterPro" id="IPR004618">
    <property type="entry name" value="AsnA"/>
</dbReference>
<dbReference type="NCBIfam" id="TIGR00669">
    <property type="entry name" value="asnA"/>
    <property type="match status" value="1"/>
</dbReference>
<dbReference type="PANTHER" id="PTHR30073">
    <property type="entry name" value="ASPARTATE--AMMONIA LIGASE"/>
    <property type="match status" value="1"/>
</dbReference>
<dbReference type="PANTHER" id="PTHR30073:SF5">
    <property type="entry name" value="ASPARTATE--AMMONIA LIGASE"/>
    <property type="match status" value="1"/>
</dbReference>
<dbReference type="Pfam" id="PF03590">
    <property type="entry name" value="AsnA"/>
    <property type="match status" value="1"/>
</dbReference>
<dbReference type="PIRSF" id="PIRSF001555">
    <property type="entry name" value="Asp_ammon_ligase"/>
    <property type="match status" value="1"/>
</dbReference>
<dbReference type="SUPFAM" id="SSF55681">
    <property type="entry name" value="Class II aaRS and biotin synthetases"/>
    <property type="match status" value="1"/>
</dbReference>
<dbReference type="PROSITE" id="PS50862">
    <property type="entry name" value="AA_TRNA_LIGASE_II"/>
    <property type="match status" value="1"/>
</dbReference>
<accession>C4ZZ22</accession>
<evidence type="ECO:0000255" key="1">
    <source>
        <dbReference type="HAMAP-Rule" id="MF_00555"/>
    </source>
</evidence>
<comment type="catalytic activity">
    <reaction evidence="1">
        <text>L-aspartate + NH4(+) + ATP = L-asparagine + AMP + diphosphate + H(+)</text>
        <dbReference type="Rhea" id="RHEA:11372"/>
        <dbReference type="ChEBI" id="CHEBI:15378"/>
        <dbReference type="ChEBI" id="CHEBI:28938"/>
        <dbReference type="ChEBI" id="CHEBI:29991"/>
        <dbReference type="ChEBI" id="CHEBI:30616"/>
        <dbReference type="ChEBI" id="CHEBI:33019"/>
        <dbReference type="ChEBI" id="CHEBI:58048"/>
        <dbReference type="ChEBI" id="CHEBI:456215"/>
        <dbReference type="EC" id="6.3.1.1"/>
    </reaction>
</comment>
<comment type="pathway">
    <text evidence="1">Amino-acid biosynthesis; L-asparagine biosynthesis; L-asparagine from L-aspartate (ammonia route): step 1/1.</text>
</comment>
<comment type="subcellular location">
    <subcellularLocation>
        <location evidence="1">Cytoplasm</location>
    </subcellularLocation>
</comment>
<comment type="similarity">
    <text evidence="1">Belongs to the class-II aminoacyl-tRNA synthetase family. AsnA subfamily.</text>
</comment>
<proteinExistence type="inferred from homology"/>
<keyword id="KW-0028">Amino-acid biosynthesis</keyword>
<keyword id="KW-0061">Asparagine biosynthesis</keyword>
<keyword id="KW-0067">ATP-binding</keyword>
<keyword id="KW-0963">Cytoplasm</keyword>
<keyword id="KW-0436">Ligase</keyword>
<keyword id="KW-0547">Nucleotide-binding</keyword>
<gene>
    <name evidence="1" type="primary">asnA</name>
    <name type="ordered locus">BWG_3435</name>
</gene>
<organism>
    <name type="scientific">Escherichia coli (strain K12 / MC4100 / BW2952)</name>
    <dbReference type="NCBI Taxonomy" id="595496"/>
    <lineage>
        <taxon>Bacteria</taxon>
        <taxon>Pseudomonadati</taxon>
        <taxon>Pseudomonadota</taxon>
        <taxon>Gammaproteobacteria</taxon>
        <taxon>Enterobacterales</taxon>
        <taxon>Enterobacteriaceae</taxon>
        <taxon>Escherichia</taxon>
    </lineage>
</organism>